<accession>Q53B53</accession>
<protein>
    <recommendedName>
        <fullName>Long neurotoxin OH-34</fullName>
    </recommendedName>
</protein>
<dbReference type="EMBL" id="AY596933">
    <property type="protein sequence ID" value="AAT97255.1"/>
    <property type="molecule type" value="mRNA"/>
</dbReference>
<dbReference type="SMR" id="Q53B53"/>
<dbReference type="TopDownProteomics" id="Q53B53"/>
<dbReference type="GO" id="GO:0005576">
    <property type="term" value="C:extracellular region"/>
    <property type="evidence" value="ECO:0007669"/>
    <property type="project" value="UniProtKB-SubCell"/>
</dbReference>
<dbReference type="GO" id="GO:0030550">
    <property type="term" value="F:acetylcholine receptor inhibitor activity"/>
    <property type="evidence" value="ECO:0007669"/>
    <property type="project" value="UniProtKB-KW"/>
</dbReference>
<dbReference type="GO" id="GO:0099106">
    <property type="term" value="F:ion channel regulator activity"/>
    <property type="evidence" value="ECO:0007669"/>
    <property type="project" value="UniProtKB-KW"/>
</dbReference>
<dbReference type="GO" id="GO:0090729">
    <property type="term" value="F:toxin activity"/>
    <property type="evidence" value="ECO:0007669"/>
    <property type="project" value="UniProtKB-KW"/>
</dbReference>
<dbReference type="CDD" id="cd00206">
    <property type="entry name" value="TFP_snake_toxin"/>
    <property type="match status" value="1"/>
</dbReference>
<dbReference type="Gene3D" id="2.10.60.10">
    <property type="entry name" value="CD59"/>
    <property type="match status" value="1"/>
</dbReference>
<dbReference type="InterPro" id="IPR003571">
    <property type="entry name" value="Snake_3FTx"/>
</dbReference>
<dbReference type="InterPro" id="IPR045860">
    <property type="entry name" value="Snake_toxin-like_sf"/>
</dbReference>
<dbReference type="InterPro" id="IPR018354">
    <property type="entry name" value="Snake_toxin_con_site"/>
</dbReference>
<dbReference type="InterPro" id="IPR054131">
    <property type="entry name" value="Toxin_cobra-type"/>
</dbReference>
<dbReference type="Pfam" id="PF21947">
    <property type="entry name" value="Toxin_cobra-type"/>
    <property type="match status" value="1"/>
</dbReference>
<dbReference type="SUPFAM" id="SSF57302">
    <property type="entry name" value="Snake toxin-like"/>
    <property type="match status" value="1"/>
</dbReference>
<dbReference type="PROSITE" id="PS00272">
    <property type="entry name" value="SNAKE_TOXIN"/>
    <property type="match status" value="1"/>
</dbReference>
<feature type="signal peptide" evidence="3">
    <location>
        <begin position="1" status="less than"/>
        <end position="20"/>
    </location>
</feature>
<feature type="chain" id="PRO_5000093325" description="Long neurotoxin OH-34">
    <location>
        <begin position="21"/>
        <end position="90"/>
    </location>
</feature>
<feature type="disulfide bond" evidence="1">
    <location>
        <begin position="23"/>
        <end position="41"/>
    </location>
</feature>
<feature type="disulfide bond" evidence="1">
    <location>
        <begin position="34"/>
        <end position="62"/>
    </location>
</feature>
<feature type="disulfide bond" evidence="1">
    <location>
        <begin position="47"/>
        <end position="51"/>
    </location>
</feature>
<feature type="disulfide bond" evidence="1">
    <location>
        <begin position="66"/>
        <end position="77"/>
    </location>
</feature>
<feature type="disulfide bond" evidence="1">
    <location>
        <begin position="78"/>
        <end position="83"/>
    </location>
</feature>
<feature type="non-terminal residue">
    <location>
        <position position="1"/>
    </location>
</feature>
<reference key="1">
    <citation type="journal article" date="2004" name="Toxicon">
        <title>Cloning and purification of alpha-neurotoxins from king cobra (Ophiophagus hannah).</title>
        <authorList>
            <person name="He Y.-Y."/>
            <person name="Lee W.-H."/>
            <person name="Zhang Y."/>
        </authorList>
    </citation>
    <scope>NUCLEOTIDE SEQUENCE [MRNA]</scope>
    <scope>PROTEIN SEQUENCE OF 21-40</scope>
    <scope>TOXIC DOSE</scope>
    <scope>SUBCELLULAR LOCATION</scope>
    <source>
        <tissue>Venom</tissue>
        <tissue>Venom gland</tissue>
    </source>
</reference>
<keyword id="KW-0008">Acetylcholine receptor inhibiting toxin</keyword>
<keyword id="KW-0903">Direct protein sequencing</keyword>
<keyword id="KW-1015">Disulfide bond</keyword>
<keyword id="KW-0872">Ion channel impairing toxin</keyword>
<keyword id="KW-0528">Neurotoxin</keyword>
<keyword id="KW-0629">Postsynaptic neurotoxin</keyword>
<keyword id="KW-0964">Secreted</keyword>
<keyword id="KW-0732">Signal</keyword>
<keyword id="KW-0800">Toxin</keyword>
<evidence type="ECO:0000250" key="1"/>
<evidence type="ECO:0000250" key="2">
    <source>
        <dbReference type="UniProtKB" id="P60615"/>
    </source>
</evidence>
<evidence type="ECO:0000269" key="3">
    <source>
    </source>
</evidence>
<evidence type="ECO:0000305" key="4"/>
<comment type="function">
    <text evidence="2">Binds with high affinity to muscular (alpha-1/CHRNA1) and neuronal (alpha-7/CHRNA7) nicotinic acetylcholine receptor (nAChR) and inhibits acetylcholine from binding to the receptor, thereby impairing neuromuscular and neuronal transmission.</text>
</comment>
<comment type="subcellular location">
    <subcellularLocation>
        <location evidence="3">Secreted</location>
    </subcellularLocation>
</comment>
<comment type="tissue specificity">
    <text evidence="4">Expressed by the venom gland.</text>
</comment>
<comment type="toxic dose">
    <text evidence="3">LD(50) is &gt;300 ug/kg by intraperitoneal injection into mice.</text>
</comment>
<comment type="similarity">
    <text evidence="4">Belongs to the three-finger toxin family. Long-chain subfamily. Type II alpha-neurotoxin sub-subfamily.</text>
</comment>
<organism>
    <name type="scientific">Ophiophagus hannah</name>
    <name type="common">King cobra</name>
    <name type="synonym">Naja hannah</name>
    <dbReference type="NCBI Taxonomy" id="8665"/>
    <lineage>
        <taxon>Eukaryota</taxon>
        <taxon>Metazoa</taxon>
        <taxon>Chordata</taxon>
        <taxon>Craniata</taxon>
        <taxon>Vertebrata</taxon>
        <taxon>Euteleostomi</taxon>
        <taxon>Lepidosauria</taxon>
        <taxon>Squamata</taxon>
        <taxon>Bifurcata</taxon>
        <taxon>Unidentata</taxon>
        <taxon>Episquamata</taxon>
        <taxon>Toxicofera</taxon>
        <taxon>Serpentes</taxon>
        <taxon>Colubroidea</taxon>
        <taxon>Elapidae</taxon>
        <taxon>Elapinae</taxon>
        <taxon>Ophiophagus</taxon>
    </lineage>
</organism>
<name>3L234_OPHHA</name>
<proteinExistence type="evidence at protein level"/>
<sequence>KTLLLTLVVVTILCLDLGYTTKCYITPDVKSETCPDGENICYTKTWCDVWCGSRGRRVDLGCAATCPIVKPGVNINCCSTDNCNPFPKRS</sequence>